<accession>Q8K9N9</accession>
<evidence type="ECO:0000255" key="1">
    <source>
        <dbReference type="HAMAP-Rule" id="MF_01605"/>
    </source>
</evidence>
<dbReference type="EC" id="3.1.1.31" evidence="1"/>
<dbReference type="EMBL" id="AE013218">
    <property type="protein sequence ID" value="AAM67839.1"/>
    <property type="molecule type" value="Genomic_DNA"/>
</dbReference>
<dbReference type="RefSeq" id="WP_011053806.1">
    <property type="nucleotide sequence ID" value="NC_004061.1"/>
</dbReference>
<dbReference type="SMR" id="Q8K9N9"/>
<dbReference type="STRING" id="198804.BUsg_282"/>
<dbReference type="GeneID" id="93003752"/>
<dbReference type="KEGG" id="bas:BUsg_282"/>
<dbReference type="eggNOG" id="COG2706">
    <property type="taxonomic scope" value="Bacteria"/>
</dbReference>
<dbReference type="HOGENOM" id="CLU_038716_2_0_6"/>
<dbReference type="UniPathway" id="UPA00115">
    <property type="reaction ID" value="UER00409"/>
</dbReference>
<dbReference type="Proteomes" id="UP000000416">
    <property type="component" value="Chromosome"/>
</dbReference>
<dbReference type="GO" id="GO:0005829">
    <property type="term" value="C:cytosol"/>
    <property type="evidence" value="ECO:0007669"/>
    <property type="project" value="TreeGrafter"/>
</dbReference>
<dbReference type="GO" id="GO:0017057">
    <property type="term" value="F:6-phosphogluconolactonase activity"/>
    <property type="evidence" value="ECO:0007669"/>
    <property type="project" value="UniProtKB-UniRule"/>
</dbReference>
<dbReference type="GO" id="GO:0006006">
    <property type="term" value="P:glucose metabolic process"/>
    <property type="evidence" value="ECO:0007669"/>
    <property type="project" value="UniProtKB-KW"/>
</dbReference>
<dbReference type="GO" id="GO:0009051">
    <property type="term" value="P:pentose-phosphate shunt, oxidative branch"/>
    <property type="evidence" value="ECO:0007669"/>
    <property type="project" value="UniProtKB-UniRule"/>
</dbReference>
<dbReference type="Gene3D" id="2.130.10.10">
    <property type="entry name" value="YVTN repeat-like/Quinoprotein amine dehydrogenase"/>
    <property type="match status" value="1"/>
</dbReference>
<dbReference type="HAMAP" id="MF_01605">
    <property type="entry name" value="6P_gluconolactonase"/>
    <property type="match status" value="1"/>
</dbReference>
<dbReference type="InterPro" id="IPR022528">
    <property type="entry name" value="6-phosphogluconolactonase_YbhE"/>
</dbReference>
<dbReference type="InterPro" id="IPR050282">
    <property type="entry name" value="Cycloisomerase_2"/>
</dbReference>
<dbReference type="InterPro" id="IPR019405">
    <property type="entry name" value="Lactonase_7-beta_prop"/>
</dbReference>
<dbReference type="InterPro" id="IPR015943">
    <property type="entry name" value="WD40/YVTN_repeat-like_dom_sf"/>
</dbReference>
<dbReference type="NCBIfam" id="NF008258">
    <property type="entry name" value="PRK11028.1"/>
    <property type="match status" value="1"/>
</dbReference>
<dbReference type="PANTHER" id="PTHR30344:SF1">
    <property type="entry name" value="6-PHOSPHOGLUCONOLACTONASE"/>
    <property type="match status" value="1"/>
</dbReference>
<dbReference type="PANTHER" id="PTHR30344">
    <property type="entry name" value="6-PHOSPHOGLUCONOLACTONASE-RELATED"/>
    <property type="match status" value="1"/>
</dbReference>
<dbReference type="Pfam" id="PF10282">
    <property type="entry name" value="Lactonase"/>
    <property type="match status" value="1"/>
</dbReference>
<dbReference type="SUPFAM" id="SSF101908">
    <property type="entry name" value="Putative isomerase YbhE"/>
    <property type="match status" value="1"/>
</dbReference>
<gene>
    <name evidence="1" type="primary">pgl</name>
    <name type="ordered locus">BUsg_282</name>
</gene>
<name>6PGL_BUCAP</name>
<comment type="function">
    <text evidence="1">Catalyzes the hydrolysis of 6-phosphogluconolactone to 6-phosphogluconate.</text>
</comment>
<comment type="catalytic activity">
    <reaction evidence="1">
        <text>6-phospho-D-glucono-1,5-lactone + H2O = 6-phospho-D-gluconate + H(+)</text>
        <dbReference type="Rhea" id="RHEA:12556"/>
        <dbReference type="ChEBI" id="CHEBI:15377"/>
        <dbReference type="ChEBI" id="CHEBI:15378"/>
        <dbReference type="ChEBI" id="CHEBI:57955"/>
        <dbReference type="ChEBI" id="CHEBI:58759"/>
        <dbReference type="EC" id="3.1.1.31"/>
    </reaction>
</comment>
<comment type="pathway">
    <text evidence="1">Carbohydrate degradation; pentose phosphate pathway; D-ribulose 5-phosphate from D-glucose 6-phosphate (oxidative stage): step 2/3.</text>
</comment>
<comment type="similarity">
    <text evidence="1">Belongs to the cycloisomerase 2 family.</text>
</comment>
<reference key="1">
    <citation type="journal article" date="2002" name="Science">
        <title>50 million years of genomic stasis in endosymbiotic bacteria.</title>
        <authorList>
            <person name="Tamas I."/>
            <person name="Klasson L."/>
            <person name="Canbaeck B."/>
            <person name="Naeslund A.K."/>
            <person name="Eriksson A.-S."/>
            <person name="Wernegreen J.J."/>
            <person name="Sandstroem J.P."/>
            <person name="Moran N.A."/>
            <person name="Andersson S.G.E."/>
        </authorList>
    </citation>
    <scope>NUCLEOTIDE SEQUENCE [LARGE SCALE GENOMIC DNA]</scope>
    <source>
        <strain>Sg</strain>
    </source>
</reference>
<proteinExistence type="inferred from homology"/>
<sequence>MQQIIYIANAESENIEVWILYNNGDMKLIQTVQTDGQVQPISIIKNTKLLYAGIRPKNRVITYQIDKNGLLKKKKESIVPGTPNYISFDSSEKFLFCSSYHADCISVSPLDKNGIPKDPIQIIHNIEGCHAAKFNSKYNVLFITSLKNDCIYLYYLTHFGILKSTEQKLVFSQKNSGPRHVIFHPNQNFSYTVNELNGSVDVWKISKENKVLEVKNIQNIKLLNDLISKKYWSSDIHLTSCGNFLYVSDRYLNSISLFHVNKNDNTIIFFKQYLTEEQPRAFCIDRNNNYLIVIGQKSNKLSVYKICQKTGELKKINQYQTGNGPLWITSFLI</sequence>
<keyword id="KW-0119">Carbohydrate metabolism</keyword>
<keyword id="KW-0313">Glucose metabolism</keyword>
<keyword id="KW-0378">Hydrolase</keyword>
<feature type="chain" id="PRO_0000171129" description="6-phosphogluconolactonase">
    <location>
        <begin position="1"/>
        <end position="333"/>
    </location>
</feature>
<organism>
    <name type="scientific">Buchnera aphidicola subsp. Schizaphis graminum (strain Sg)</name>
    <dbReference type="NCBI Taxonomy" id="198804"/>
    <lineage>
        <taxon>Bacteria</taxon>
        <taxon>Pseudomonadati</taxon>
        <taxon>Pseudomonadota</taxon>
        <taxon>Gammaproteobacteria</taxon>
        <taxon>Enterobacterales</taxon>
        <taxon>Erwiniaceae</taxon>
        <taxon>Buchnera</taxon>
    </lineage>
</organism>
<protein>
    <recommendedName>
        <fullName evidence="1">6-phosphogluconolactonase</fullName>
        <shortName evidence="1">6-P-gluconolactonase</shortName>
        <ecNumber evidence="1">3.1.1.31</ecNumber>
    </recommendedName>
</protein>